<keyword id="KW-0963">Cytoplasm</keyword>
<keyword id="KW-0414">Isoprene biosynthesis</keyword>
<keyword id="KW-0460">Magnesium</keyword>
<keyword id="KW-0479">Metal-binding</keyword>
<keyword id="KW-0808">Transferase</keyword>
<evidence type="ECO:0000250" key="1"/>
<evidence type="ECO:0000250" key="2">
    <source>
        <dbReference type="UniProtKB" id="P14324"/>
    </source>
</evidence>
<evidence type="ECO:0000250" key="3">
    <source>
        <dbReference type="UniProtKB" id="Q12051"/>
    </source>
</evidence>
<evidence type="ECO:0000305" key="4"/>
<proteinExistence type="inferred from homology"/>
<name>ISPA_MICLU</name>
<protein>
    <recommendedName>
        <fullName>Farnesyl diphosphate synthase</fullName>
        <shortName>FPP synthase</shortName>
        <ecNumber>2.5.1.10</ecNumber>
    </recommendedName>
    <alternativeName>
        <fullName>(2E,6E)-farnesyl diphosphate synthase</fullName>
    </alternativeName>
    <alternativeName>
        <fullName>Geranyltranstransferase</fullName>
    </alternativeName>
</protein>
<organism>
    <name type="scientific">Micrococcus luteus</name>
    <name type="common">Micrococcus lysodeikticus</name>
    <dbReference type="NCBI Taxonomy" id="1270"/>
    <lineage>
        <taxon>Bacteria</taxon>
        <taxon>Bacillati</taxon>
        <taxon>Actinomycetota</taxon>
        <taxon>Actinomycetes</taxon>
        <taxon>Micrococcales</taxon>
        <taxon>Micrococcaceae</taxon>
        <taxon>Micrococcus</taxon>
    </lineage>
</organism>
<feature type="chain" id="PRO_0000123991" description="Farnesyl diphosphate synthase">
    <location>
        <begin position="1"/>
        <end position="291"/>
    </location>
</feature>
<feature type="binding site" evidence="2">
    <location>
        <position position="44"/>
    </location>
    <ligand>
        <name>isopentenyl diphosphate</name>
        <dbReference type="ChEBI" id="CHEBI:128769"/>
    </ligand>
</feature>
<feature type="binding site" evidence="2">
    <location>
        <position position="47"/>
    </location>
    <ligand>
        <name>isopentenyl diphosphate</name>
        <dbReference type="ChEBI" id="CHEBI:128769"/>
    </ligand>
</feature>
<feature type="binding site" evidence="3">
    <location>
        <position position="76"/>
    </location>
    <ligand>
        <name>isopentenyl diphosphate</name>
        <dbReference type="ChEBI" id="CHEBI:128769"/>
    </ligand>
</feature>
<feature type="binding site" evidence="2">
    <location>
        <position position="83"/>
    </location>
    <ligand>
        <name>Mg(2+)</name>
        <dbReference type="ChEBI" id="CHEBI:18420"/>
        <label>1</label>
    </ligand>
</feature>
<feature type="binding site" evidence="2">
    <location>
        <position position="83"/>
    </location>
    <ligand>
        <name>Mg(2+)</name>
        <dbReference type="ChEBI" id="CHEBI:18420"/>
        <label>2</label>
    </ligand>
</feature>
<feature type="binding site" evidence="2">
    <location>
        <position position="89"/>
    </location>
    <ligand>
        <name>Mg(2+)</name>
        <dbReference type="ChEBI" id="CHEBI:18420"/>
        <label>1</label>
    </ligand>
</feature>
<feature type="binding site" evidence="2">
    <location>
        <position position="89"/>
    </location>
    <ligand>
        <name>Mg(2+)</name>
        <dbReference type="ChEBI" id="CHEBI:18420"/>
        <label>2</label>
    </ligand>
</feature>
<feature type="binding site" evidence="1">
    <location>
        <position position="94"/>
    </location>
    <ligand>
        <name>(2E)-geranyl diphosphate</name>
        <dbReference type="ChEBI" id="CHEBI:58057"/>
    </ligand>
</feature>
<feature type="binding site" evidence="2">
    <location>
        <position position="95"/>
    </location>
    <ligand>
        <name>isopentenyl diphosphate</name>
        <dbReference type="ChEBI" id="CHEBI:128769"/>
    </ligand>
</feature>
<feature type="binding site" evidence="1">
    <location>
        <position position="177"/>
    </location>
    <ligand>
        <name>(2E)-geranyl diphosphate</name>
        <dbReference type="ChEBI" id="CHEBI:58057"/>
    </ligand>
</feature>
<feature type="binding site" evidence="1">
    <location>
        <position position="178"/>
    </location>
    <ligand>
        <name>(2E)-geranyl diphosphate</name>
        <dbReference type="ChEBI" id="CHEBI:58057"/>
    </ligand>
</feature>
<feature type="binding site" evidence="1">
    <location>
        <position position="215"/>
    </location>
    <ligand>
        <name>(2E)-geranyl diphosphate</name>
        <dbReference type="ChEBI" id="CHEBI:58057"/>
    </ligand>
</feature>
<feature type="binding site" evidence="1">
    <location>
        <position position="232"/>
    </location>
    <ligand>
        <name>(2E)-geranyl diphosphate</name>
        <dbReference type="ChEBI" id="CHEBI:58057"/>
    </ligand>
</feature>
<comment type="catalytic activity">
    <reaction>
        <text>isopentenyl diphosphate + (2E)-geranyl diphosphate = (2E,6E)-farnesyl diphosphate + diphosphate</text>
        <dbReference type="Rhea" id="RHEA:19361"/>
        <dbReference type="ChEBI" id="CHEBI:33019"/>
        <dbReference type="ChEBI" id="CHEBI:58057"/>
        <dbReference type="ChEBI" id="CHEBI:128769"/>
        <dbReference type="ChEBI" id="CHEBI:175763"/>
        <dbReference type="EC" id="2.5.1.10"/>
    </reaction>
</comment>
<comment type="cofactor">
    <cofactor evidence="1">
        <name>Mg(2+)</name>
        <dbReference type="ChEBI" id="CHEBI:18420"/>
    </cofactor>
    <text evidence="1">Binds 2 Mg(2+) ions per subunit.</text>
</comment>
<comment type="subcellular location">
    <subcellularLocation>
        <location evidence="4">Cytoplasm</location>
    </subcellularLocation>
</comment>
<comment type="similarity">
    <text evidence="4">Belongs to the FPP/GGPP synthase family.</text>
</comment>
<accession>O66126</accession>
<dbReference type="EC" id="2.5.1.10"/>
<dbReference type="EMBL" id="AB003187">
    <property type="protein sequence ID" value="BAA25265.1"/>
    <property type="molecule type" value="Genomic_DNA"/>
</dbReference>
<dbReference type="SMR" id="O66126"/>
<dbReference type="GO" id="GO:0005737">
    <property type="term" value="C:cytoplasm"/>
    <property type="evidence" value="ECO:0007669"/>
    <property type="project" value="UniProtKB-SubCell"/>
</dbReference>
<dbReference type="GO" id="GO:0004337">
    <property type="term" value="F:(2E,6E)-farnesyl diphosphate synthase activity"/>
    <property type="evidence" value="ECO:0007669"/>
    <property type="project" value="UniProtKB-EC"/>
</dbReference>
<dbReference type="GO" id="GO:0046872">
    <property type="term" value="F:metal ion binding"/>
    <property type="evidence" value="ECO:0007669"/>
    <property type="project" value="UniProtKB-KW"/>
</dbReference>
<dbReference type="GO" id="GO:0008299">
    <property type="term" value="P:isoprenoid biosynthetic process"/>
    <property type="evidence" value="ECO:0007669"/>
    <property type="project" value="UniProtKB-KW"/>
</dbReference>
<dbReference type="CDD" id="cd00685">
    <property type="entry name" value="Trans_IPPS_HT"/>
    <property type="match status" value="1"/>
</dbReference>
<dbReference type="FunFam" id="1.10.600.10:FF:000001">
    <property type="entry name" value="Geranylgeranyl diphosphate synthase"/>
    <property type="match status" value="1"/>
</dbReference>
<dbReference type="Gene3D" id="1.10.600.10">
    <property type="entry name" value="Farnesyl Diphosphate Synthase"/>
    <property type="match status" value="1"/>
</dbReference>
<dbReference type="InterPro" id="IPR008949">
    <property type="entry name" value="Isoprenoid_synthase_dom_sf"/>
</dbReference>
<dbReference type="InterPro" id="IPR000092">
    <property type="entry name" value="Polyprenyl_synt"/>
</dbReference>
<dbReference type="InterPro" id="IPR033749">
    <property type="entry name" value="Polyprenyl_synt_CS"/>
</dbReference>
<dbReference type="InterPro" id="IPR053378">
    <property type="entry name" value="Prenyl_diphosphate_synthase"/>
</dbReference>
<dbReference type="NCBIfam" id="NF045485">
    <property type="entry name" value="FPPsyn"/>
    <property type="match status" value="1"/>
</dbReference>
<dbReference type="PANTHER" id="PTHR43281">
    <property type="entry name" value="FARNESYL DIPHOSPHATE SYNTHASE"/>
    <property type="match status" value="1"/>
</dbReference>
<dbReference type="PANTHER" id="PTHR43281:SF1">
    <property type="entry name" value="FARNESYL DIPHOSPHATE SYNTHASE"/>
    <property type="match status" value="1"/>
</dbReference>
<dbReference type="Pfam" id="PF00348">
    <property type="entry name" value="polyprenyl_synt"/>
    <property type="match status" value="1"/>
</dbReference>
<dbReference type="SFLD" id="SFLDS00005">
    <property type="entry name" value="Isoprenoid_Synthase_Type_I"/>
    <property type="match status" value="1"/>
</dbReference>
<dbReference type="SFLD" id="SFLDG01017">
    <property type="entry name" value="Polyprenyl_Transferase_Like"/>
    <property type="match status" value="1"/>
</dbReference>
<dbReference type="SUPFAM" id="SSF48576">
    <property type="entry name" value="Terpenoid synthases"/>
    <property type="match status" value="1"/>
</dbReference>
<dbReference type="PROSITE" id="PS00723">
    <property type="entry name" value="POLYPRENYL_SYNTHASE_1"/>
    <property type="match status" value="1"/>
</dbReference>
<dbReference type="PROSITE" id="PS00444">
    <property type="entry name" value="POLYPRENYL_SYNTHASE_2"/>
    <property type="match status" value="1"/>
</dbReference>
<sequence>MLQEKLTMNRDFLNLINESLLNKYHPAQSRLHEAINYSLSAGGKRIRPLLVLTTLDSLGGNAHDGLPFGIALEMIHTYSLIHDDLPAMDNDDYRRGKLTNHKRFDEATAILAGDALLTDAFQCILNTQLNAEIKLSLINLLSTASGSNGMVYGQMLDMQGEHKTLTLNELERIHIHKTGELIRAAIVSAGIIMNFNDAQIEQLNIIGKNVGLMFQIKDDILDVEGSFENIGKTVGSDLNNDKSTYVSLLGLEASKQLLNDKLTETYDALKTLQPINDNLKTLITYIVERNK</sequence>
<gene>
    <name type="primary">fps</name>
</gene>
<reference key="1">
    <citation type="journal article" date="1998" name="J. Bacteriol.">
        <title>Molecular cloning, expression, and characterization of the genes encoding the two essential protein components of Micrococcus luteus B-P 26 hexaprenyl diphosphate synthase.</title>
        <authorList>
            <person name="Shimizu N."/>
            <person name="Koyama T."/>
            <person name="Ogura K."/>
        </authorList>
    </citation>
    <scope>NUCLEOTIDE SEQUENCE [GENOMIC DNA]</scope>
    <source>
        <strain>B-P 26</strain>
    </source>
</reference>